<sequence length="166" mass="18152">MAEIGEFLKKYAGFCGLLPPSVDNSLLDFLANLPIILVFLITMPVRFFICIFAGLAKVNPICVLINLLPPLAIAIPFVTAQTPPVCSTQCQYCQSGKGECLNYNPTIAKYFTQCEKQLSVLNKIFCLVGIIIADVLNPILAFINPLIYLAIHKVICLNTNPCICGL</sequence>
<protein>
    <recommendedName>
        <fullName>Putative transmembrane protein ORF166</fullName>
    </recommendedName>
</protein>
<accession>A4ZUD0</accession>
<organismHost>
    <name type="scientific">Acidianus convivator</name>
    <dbReference type="NCBI Taxonomy" id="269667"/>
</organismHost>
<name>Y166_ABVP</name>
<feature type="chain" id="PRO_0000384861" description="Putative transmembrane protein ORF166">
    <location>
        <begin position="1"/>
        <end position="166"/>
    </location>
</feature>
<feature type="transmembrane region" description="Helical" evidence="1">
    <location>
        <begin position="35"/>
        <end position="55"/>
    </location>
</feature>
<feature type="transmembrane region" description="Helical" evidence="1">
    <location>
        <begin position="60"/>
        <end position="80"/>
    </location>
</feature>
<feature type="transmembrane region" description="Helical" evidence="1">
    <location>
        <begin position="124"/>
        <end position="144"/>
    </location>
</feature>
<organism>
    <name type="scientific">Acidianus bottle-shaped virus (isolate Italy/Pozzuoli)</name>
    <name type="common">ABV</name>
    <dbReference type="NCBI Taxonomy" id="654911"/>
    <lineage>
        <taxon>Viruses</taxon>
        <taxon>Viruses incertae sedis</taxon>
        <taxon>Ampullaviridae</taxon>
        <taxon>Bottigliavirus</taxon>
        <taxon>Bottigliavirus ABV</taxon>
    </lineage>
</organism>
<proteinExistence type="predicted"/>
<reference key="1">
    <citation type="journal article" date="2007" name="Virology">
        <title>Genome of the Acidianus bottle-shaped virus and insights into the replication and packaging mechanisms.</title>
        <authorList>
            <person name="Peng X."/>
            <person name="Basta T."/>
            <person name="Haring M."/>
            <person name="Garrett R.A."/>
            <person name="Prangishvili D."/>
        </authorList>
    </citation>
    <scope>NUCLEOTIDE SEQUENCE [GENOMIC DNA]</scope>
</reference>
<gene>
    <name type="ORF">ORF166</name>
</gene>
<evidence type="ECO:0000255" key="1"/>
<evidence type="ECO:0000305" key="2"/>
<keyword id="KW-1043">Host membrane</keyword>
<keyword id="KW-0472">Membrane</keyword>
<keyword id="KW-1185">Reference proteome</keyword>
<keyword id="KW-0812">Transmembrane</keyword>
<keyword id="KW-1133">Transmembrane helix</keyword>
<comment type="subcellular location">
    <subcellularLocation>
        <location evidence="2">Host membrane</location>
        <topology evidence="2">Multi-pass membrane protein</topology>
    </subcellularLocation>
</comment>
<dbReference type="EMBL" id="EF432053">
    <property type="protein sequence ID" value="ABP73434.1"/>
    <property type="molecule type" value="Genomic_DNA"/>
</dbReference>
<dbReference type="RefSeq" id="YP_001210348.1">
    <property type="nucleotide sequence ID" value="NC_009452.1"/>
</dbReference>
<dbReference type="GeneID" id="5129810"/>
<dbReference type="KEGG" id="vg:5129810"/>
<dbReference type="Proteomes" id="UP000000513">
    <property type="component" value="Segment"/>
</dbReference>
<dbReference type="GO" id="GO:0033644">
    <property type="term" value="C:host cell membrane"/>
    <property type="evidence" value="ECO:0007669"/>
    <property type="project" value="UniProtKB-SubCell"/>
</dbReference>
<dbReference type="GO" id="GO:0016020">
    <property type="term" value="C:membrane"/>
    <property type="evidence" value="ECO:0007669"/>
    <property type="project" value="UniProtKB-KW"/>
</dbReference>